<proteinExistence type="inferred from homology"/>
<comment type="function">
    <text evidence="1">Histone-like DNA-binding protein which is capable of wrapping DNA to stabilize it, and thus to prevent its denaturation under extreme environmental conditions.</text>
</comment>
<comment type="subunit">
    <text evidence="1">Homodimer.</text>
</comment>
<comment type="similarity">
    <text evidence="3">Belongs to the bacterial histone-like protein family.</text>
</comment>
<name>DBH1_HALH5</name>
<gene>
    <name type="primary">hup1</name>
    <name type="ordered locus">BH1309</name>
</gene>
<reference key="1">
    <citation type="journal article" date="2000" name="Nucleic Acids Res.">
        <title>Complete genome sequence of the alkaliphilic bacterium Bacillus halodurans and genomic sequence comparison with Bacillus subtilis.</title>
        <authorList>
            <person name="Takami H."/>
            <person name="Nakasone K."/>
            <person name="Takaki Y."/>
            <person name="Maeno G."/>
            <person name="Sasaki R."/>
            <person name="Masui N."/>
            <person name="Fuji F."/>
            <person name="Hirama C."/>
            <person name="Nakamura Y."/>
            <person name="Ogasawara N."/>
            <person name="Kuhara S."/>
            <person name="Horikoshi K."/>
        </authorList>
    </citation>
    <scope>NUCLEOTIDE SEQUENCE [LARGE SCALE GENOMIC DNA]</scope>
    <source>
        <strain>ATCC BAA-125 / DSM 18197 / FERM 7344 / JCM 9153 / C-125</strain>
    </source>
</reference>
<protein>
    <recommendedName>
        <fullName>DNA-binding protein HU-1</fullName>
    </recommendedName>
</protein>
<feature type="chain" id="PRO_0000104910" description="DNA-binding protein HU-1">
    <location>
        <begin position="1"/>
        <end position="90"/>
    </location>
</feature>
<feature type="region of interest" description="Disordered" evidence="2">
    <location>
        <begin position="55"/>
        <end position="90"/>
    </location>
</feature>
<feature type="modified residue" description="Phosphothreonine" evidence="1">
    <location>
        <position position="4"/>
    </location>
</feature>
<accession>Q9KDA5</accession>
<evidence type="ECO:0000250" key="1"/>
<evidence type="ECO:0000256" key="2">
    <source>
        <dbReference type="SAM" id="MobiDB-lite"/>
    </source>
</evidence>
<evidence type="ECO:0000305" key="3"/>
<dbReference type="EMBL" id="BA000004">
    <property type="protein sequence ID" value="BAB05028.1"/>
    <property type="molecule type" value="Genomic_DNA"/>
</dbReference>
<dbReference type="PIR" id="E83813">
    <property type="entry name" value="E83813"/>
</dbReference>
<dbReference type="RefSeq" id="WP_010897476.1">
    <property type="nucleotide sequence ID" value="NC_002570.2"/>
</dbReference>
<dbReference type="SMR" id="Q9KDA5"/>
<dbReference type="STRING" id="272558.gene:10727203"/>
<dbReference type="GeneID" id="87596931"/>
<dbReference type="KEGG" id="bha:BH1309"/>
<dbReference type="eggNOG" id="COG0776">
    <property type="taxonomic scope" value="Bacteria"/>
</dbReference>
<dbReference type="HOGENOM" id="CLU_105066_3_1_9"/>
<dbReference type="OrthoDB" id="9799835at2"/>
<dbReference type="Proteomes" id="UP000001258">
    <property type="component" value="Chromosome"/>
</dbReference>
<dbReference type="GO" id="GO:0005829">
    <property type="term" value="C:cytosol"/>
    <property type="evidence" value="ECO:0007669"/>
    <property type="project" value="TreeGrafter"/>
</dbReference>
<dbReference type="GO" id="GO:0003677">
    <property type="term" value="F:DNA binding"/>
    <property type="evidence" value="ECO:0007669"/>
    <property type="project" value="UniProtKB-KW"/>
</dbReference>
<dbReference type="GO" id="GO:0030527">
    <property type="term" value="F:structural constituent of chromatin"/>
    <property type="evidence" value="ECO:0007669"/>
    <property type="project" value="InterPro"/>
</dbReference>
<dbReference type="GO" id="GO:0030261">
    <property type="term" value="P:chromosome condensation"/>
    <property type="evidence" value="ECO:0007669"/>
    <property type="project" value="UniProtKB-KW"/>
</dbReference>
<dbReference type="CDD" id="cd13831">
    <property type="entry name" value="HU"/>
    <property type="match status" value="1"/>
</dbReference>
<dbReference type="FunFam" id="4.10.520.10:FF:000001">
    <property type="entry name" value="DNA-binding protein HU"/>
    <property type="match status" value="1"/>
</dbReference>
<dbReference type="Gene3D" id="4.10.520.10">
    <property type="entry name" value="IHF-like DNA-binding proteins"/>
    <property type="match status" value="1"/>
</dbReference>
<dbReference type="InterPro" id="IPR000119">
    <property type="entry name" value="Hist_DNA-bd"/>
</dbReference>
<dbReference type="InterPro" id="IPR020816">
    <property type="entry name" value="Histone-like_DNA-bd_CS"/>
</dbReference>
<dbReference type="InterPro" id="IPR010992">
    <property type="entry name" value="IHF-like_DNA-bd_dom_sf"/>
</dbReference>
<dbReference type="PANTHER" id="PTHR33175">
    <property type="entry name" value="DNA-BINDING PROTEIN HU"/>
    <property type="match status" value="1"/>
</dbReference>
<dbReference type="PANTHER" id="PTHR33175:SF3">
    <property type="entry name" value="DNA-BINDING PROTEIN HU-BETA"/>
    <property type="match status" value="1"/>
</dbReference>
<dbReference type="Pfam" id="PF00216">
    <property type="entry name" value="Bac_DNA_binding"/>
    <property type="match status" value="1"/>
</dbReference>
<dbReference type="PRINTS" id="PR01727">
    <property type="entry name" value="DNABINDINGHU"/>
</dbReference>
<dbReference type="SMART" id="SM00411">
    <property type="entry name" value="BHL"/>
    <property type="match status" value="1"/>
</dbReference>
<dbReference type="SUPFAM" id="SSF47729">
    <property type="entry name" value="IHF-like DNA-binding proteins"/>
    <property type="match status" value="1"/>
</dbReference>
<dbReference type="PROSITE" id="PS00045">
    <property type="entry name" value="HISTONE_LIKE"/>
    <property type="match status" value="1"/>
</dbReference>
<organism>
    <name type="scientific">Halalkalibacterium halodurans (strain ATCC BAA-125 / DSM 18197 / FERM 7344 / JCM 9153 / C-125)</name>
    <name type="common">Bacillus halodurans</name>
    <dbReference type="NCBI Taxonomy" id="272558"/>
    <lineage>
        <taxon>Bacteria</taxon>
        <taxon>Bacillati</taxon>
        <taxon>Bacillota</taxon>
        <taxon>Bacilli</taxon>
        <taxon>Bacillales</taxon>
        <taxon>Bacillaceae</taxon>
        <taxon>Halalkalibacterium (ex Joshi et al. 2022)</taxon>
    </lineage>
</organism>
<keyword id="KW-0226">DNA condensation</keyword>
<keyword id="KW-0238">DNA-binding</keyword>
<keyword id="KW-0597">Phosphoprotein</keyword>
<keyword id="KW-1185">Reference proteome</keyword>
<sequence length="90" mass="9657">MNKTDLINAVAEQAELSKKDASKAVDAVFESITGALKEGGKVQLVGFGSFEVRERSARKGRNPQTGEEIEIPATKNPAFKPGKQLKDAVN</sequence>